<proteinExistence type="inferred from homology"/>
<protein>
    <recommendedName>
        <fullName>Cytochrome b</fullName>
    </recommendedName>
    <alternativeName>
        <fullName>Complex III subunit 3</fullName>
    </alternativeName>
    <alternativeName>
        <fullName>Complex III subunit III</fullName>
    </alternativeName>
    <alternativeName>
        <fullName>Cytochrome b-c1 complex subunit 3</fullName>
    </alternativeName>
    <alternativeName>
        <fullName>Ubiquinol-cytochrome-c reductase complex cytochrome b subunit</fullName>
    </alternativeName>
</protein>
<keyword id="KW-0249">Electron transport</keyword>
<keyword id="KW-0349">Heme</keyword>
<keyword id="KW-0408">Iron</keyword>
<keyword id="KW-0472">Membrane</keyword>
<keyword id="KW-0479">Metal-binding</keyword>
<keyword id="KW-0496">Mitochondrion</keyword>
<keyword id="KW-0999">Mitochondrion inner membrane</keyword>
<keyword id="KW-0679">Respiratory chain</keyword>
<keyword id="KW-0812">Transmembrane</keyword>
<keyword id="KW-1133">Transmembrane helix</keyword>
<keyword id="KW-0813">Transport</keyword>
<keyword id="KW-0830">Ubiquinone</keyword>
<dbReference type="EMBL" id="AY292724">
    <property type="protein sequence ID" value="AAS54920.1"/>
    <property type="molecule type" value="Genomic_DNA"/>
</dbReference>
<dbReference type="EMBL" id="AF034257">
    <property type="protein sequence ID" value="AAB87629.1"/>
    <property type="molecule type" value="Genomic_DNA"/>
</dbReference>
<dbReference type="SMR" id="O47415"/>
<dbReference type="GO" id="GO:0005743">
    <property type="term" value="C:mitochondrial inner membrane"/>
    <property type="evidence" value="ECO:0007669"/>
    <property type="project" value="UniProtKB-SubCell"/>
</dbReference>
<dbReference type="GO" id="GO:0045275">
    <property type="term" value="C:respiratory chain complex III"/>
    <property type="evidence" value="ECO:0007669"/>
    <property type="project" value="InterPro"/>
</dbReference>
<dbReference type="GO" id="GO:0046872">
    <property type="term" value="F:metal ion binding"/>
    <property type="evidence" value="ECO:0007669"/>
    <property type="project" value="UniProtKB-KW"/>
</dbReference>
<dbReference type="GO" id="GO:0008121">
    <property type="term" value="F:ubiquinol-cytochrome-c reductase activity"/>
    <property type="evidence" value="ECO:0007669"/>
    <property type="project" value="InterPro"/>
</dbReference>
<dbReference type="GO" id="GO:0006122">
    <property type="term" value="P:mitochondrial electron transport, ubiquinol to cytochrome c"/>
    <property type="evidence" value="ECO:0007669"/>
    <property type="project" value="TreeGrafter"/>
</dbReference>
<dbReference type="CDD" id="cd00290">
    <property type="entry name" value="cytochrome_b_C"/>
    <property type="match status" value="1"/>
</dbReference>
<dbReference type="CDD" id="cd00284">
    <property type="entry name" value="Cytochrome_b_N"/>
    <property type="match status" value="1"/>
</dbReference>
<dbReference type="FunFam" id="1.20.810.10:FF:000002">
    <property type="entry name" value="Cytochrome b"/>
    <property type="match status" value="1"/>
</dbReference>
<dbReference type="Gene3D" id="1.20.810.10">
    <property type="entry name" value="Cytochrome Bc1 Complex, Chain C"/>
    <property type="match status" value="1"/>
</dbReference>
<dbReference type="InterPro" id="IPR005798">
    <property type="entry name" value="Cyt_b/b6_C"/>
</dbReference>
<dbReference type="InterPro" id="IPR036150">
    <property type="entry name" value="Cyt_b/b6_C_sf"/>
</dbReference>
<dbReference type="InterPro" id="IPR005797">
    <property type="entry name" value="Cyt_b/b6_N"/>
</dbReference>
<dbReference type="InterPro" id="IPR027387">
    <property type="entry name" value="Cytb/b6-like_sf"/>
</dbReference>
<dbReference type="InterPro" id="IPR030689">
    <property type="entry name" value="Cytochrome_b"/>
</dbReference>
<dbReference type="InterPro" id="IPR048260">
    <property type="entry name" value="Cytochrome_b_C_euk/bac"/>
</dbReference>
<dbReference type="InterPro" id="IPR048259">
    <property type="entry name" value="Cytochrome_b_N_euk/bac"/>
</dbReference>
<dbReference type="InterPro" id="IPR016174">
    <property type="entry name" value="Di-haem_cyt_TM"/>
</dbReference>
<dbReference type="PANTHER" id="PTHR19271">
    <property type="entry name" value="CYTOCHROME B"/>
    <property type="match status" value="1"/>
</dbReference>
<dbReference type="PANTHER" id="PTHR19271:SF16">
    <property type="entry name" value="CYTOCHROME B"/>
    <property type="match status" value="1"/>
</dbReference>
<dbReference type="Pfam" id="PF00032">
    <property type="entry name" value="Cytochrom_B_C"/>
    <property type="match status" value="1"/>
</dbReference>
<dbReference type="Pfam" id="PF00033">
    <property type="entry name" value="Cytochrome_B"/>
    <property type="match status" value="1"/>
</dbReference>
<dbReference type="PIRSF" id="PIRSF038885">
    <property type="entry name" value="COB"/>
    <property type="match status" value="1"/>
</dbReference>
<dbReference type="SUPFAM" id="SSF81648">
    <property type="entry name" value="a domain/subunit of cytochrome bc1 complex (Ubiquinol-cytochrome c reductase)"/>
    <property type="match status" value="1"/>
</dbReference>
<dbReference type="SUPFAM" id="SSF81342">
    <property type="entry name" value="Transmembrane di-heme cytochromes"/>
    <property type="match status" value="1"/>
</dbReference>
<dbReference type="PROSITE" id="PS51003">
    <property type="entry name" value="CYTB_CTER"/>
    <property type="match status" value="1"/>
</dbReference>
<dbReference type="PROSITE" id="PS51002">
    <property type="entry name" value="CYTB_NTER"/>
    <property type="match status" value="1"/>
</dbReference>
<feature type="chain" id="PRO_0000061625" description="Cytochrome b">
    <location>
        <begin position="1"/>
        <end position="379"/>
    </location>
</feature>
<feature type="transmembrane region" description="Helical" evidence="2">
    <location>
        <begin position="33"/>
        <end position="53"/>
    </location>
</feature>
<feature type="transmembrane region" description="Helical" evidence="2">
    <location>
        <begin position="77"/>
        <end position="98"/>
    </location>
</feature>
<feature type="transmembrane region" description="Helical" evidence="2">
    <location>
        <begin position="113"/>
        <end position="133"/>
    </location>
</feature>
<feature type="transmembrane region" description="Helical" evidence="2">
    <location>
        <begin position="178"/>
        <end position="198"/>
    </location>
</feature>
<feature type="transmembrane region" description="Helical" evidence="2">
    <location>
        <begin position="226"/>
        <end position="246"/>
    </location>
</feature>
<feature type="transmembrane region" description="Helical" evidence="2">
    <location>
        <begin position="288"/>
        <end position="308"/>
    </location>
</feature>
<feature type="transmembrane region" description="Helical" evidence="2">
    <location>
        <begin position="320"/>
        <end position="340"/>
    </location>
</feature>
<feature type="transmembrane region" description="Helical" evidence="2">
    <location>
        <begin position="347"/>
        <end position="367"/>
    </location>
</feature>
<feature type="binding site" description="axial binding residue" evidence="2">
    <location>
        <position position="83"/>
    </location>
    <ligand>
        <name>heme b</name>
        <dbReference type="ChEBI" id="CHEBI:60344"/>
        <label>b562</label>
    </ligand>
    <ligandPart>
        <name>Fe</name>
        <dbReference type="ChEBI" id="CHEBI:18248"/>
    </ligandPart>
</feature>
<feature type="binding site" description="axial binding residue" evidence="2">
    <location>
        <position position="97"/>
    </location>
    <ligand>
        <name>heme b</name>
        <dbReference type="ChEBI" id="CHEBI:60344"/>
        <label>b566</label>
    </ligand>
    <ligandPart>
        <name>Fe</name>
        <dbReference type="ChEBI" id="CHEBI:18248"/>
    </ligandPart>
</feature>
<feature type="binding site" description="axial binding residue" evidence="2">
    <location>
        <position position="182"/>
    </location>
    <ligand>
        <name>heme b</name>
        <dbReference type="ChEBI" id="CHEBI:60344"/>
        <label>b562</label>
    </ligand>
    <ligandPart>
        <name>Fe</name>
        <dbReference type="ChEBI" id="CHEBI:18248"/>
    </ligandPart>
</feature>
<feature type="binding site" description="axial binding residue" evidence="2">
    <location>
        <position position="196"/>
    </location>
    <ligand>
        <name>heme b</name>
        <dbReference type="ChEBI" id="CHEBI:60344"/>
        <label>b566</label>
    </ligand>
    <ligandPart>
        <name>Fe</name>
        <dbReference type="ChEBI" id="CHEBI:18248"/>
    </ligandPart>
</feature>
<feature type="binding site" evidence="2">
    <location>
        <position position="201"/>
    </location>
    <ligand>
        <name>a ubiquinone</name>
        <dbReference type="ChEBI" id="CHEBI:16389"/>
    </ligand>
</feature>
<feature type="sequence conflict" description="In Ref. 2; AAB87629." evidence="5" ref="2">
    <original>A</original>
    <variation>T</variation>
    <location>
        <position position="29"/>
    </location>
</feature>
<feature type="sequence conflict" description="In Ref. 2; AAB87629." evidence="5" ref="2">
    <original>S</original>
    <variation>V</variation>
    <location>
        <position position="153"/>
    </location>
</feature>
<feature type="sequence conflict" description="In Ref. 2; AAB87629." evidence="5" ref="2">
    <original>F</original>
    <variation>L</variation>
    <location>
        <position position="365"/>
    </location>
</feature>
<reference key="1">
    <citation type="journal article" date="2004" name="Syst. Biol.">
        <title>A molecular supermatrix of the rabbits and hares (Leporidae) allows for the identification of five intercontinental exchanges during the Miocene.</title>
        <authorList>
            <person name="Matthee C.A."/>
            <person name="van Vuuren B.J."/>
            <person name="Bell D."/>
            <person name="Robinson T.J."/>
        </authorList>
    </citation>
    <scope>NUCLEOTIDE SEQUENCE [GENOMIC DNA]</scope>
</reference>
<reference key="2">
    <citation type="submission" date="1997-11" db="EMBL/GenBank/DDBJ databases">
        <authorList>
            <person name="Snyder M.W."/>
            <person name="Husband T.P."/>
        </authorList>
    </citation>
    <scope>NUCLEOTIDE SEQUENCE [GENOMIC DNA] OF 11-379</scope>
</reference>
<sequence length="379" mass="42721">MTNIRKTHPLLKIVNHSLIDLPAPSNISAWWNFGSLLGLCLMIQILTGLFLAMHYTSDTLTAFSSVTHICRDVNYGWLIRYLHANGASMFFICLYMHVGRGIYYGSYTYLETWNIGIILLFAVMATAFMGYVLPWGQMSFWGATVITNLLSASPYIGTTLVEWIWGGFSVDKATLTRFFAFHFILPFIIAALVMVHLLFLHETGSNNPSGIPSDSDKIPFHPYYTIKDALGFLVLILLLLLLVLFSPDLLGDPDNYTPANPLNTPPHIKPEWYFLFAYAILRSIPNKLGGVLALVMSILVLAIIPLLHMSKQRSMMFRPISQVLFWILVADLLTLTWIGGQPVEHPFITIGQVASILYFSIILIFMPLASLIENKILKW</sequence>
<accession>O47415</accession>
<accession>Q6ELW0</accession>
<comment type="function">
    <text evidence="2">Component of the ubiquinol-cytochrome c reductase complex (complex III or cytochrome b-c1 complex) that is part of the mitochondrial respiratory chain. The b-c1 complex mediates electron transfer from ubiquinol to cytochrome c. Contributes to the generation of a proton gradient across the mitochondrial membrane that is then used for ATP synthesis.</text>
</comment>
<comment type="cofactor">
    <cofactor evidence="2">
        <name>heme b</name>
        <dbReference type="ChEBI" id="CHEBI:60344"/>
    </cofactor>
    <text evidence="2">Binds 2 heme b groups non-covalently.</text>
</comment>
<comment type="subunit">
    <text evidence="2">The cytochrome bc1 complex contains 11 subunits: 3 respiratory subunits (MT-CYB, CYC1 and UQCRFS1), 2 core proteins (UQCRC1 and UQCRC2) and 6 low-molecular weight proteins (UQCRH/QCR6, UQCRB/QCR7, UQCRQ/QCR8, UQCR10/QCR9, UQCR11/QCR10 and a cleavage product of UQCRFS1). This cytochrome bc1 complex then forms a dimer.</text>
</comment>
<comment type="subcellular location">
    <subcellularLocation>
        <location evidence="2">Mitochondrion inner membrane</location>
        <topology evidence="2">Multi-pass membrane protein</topology>
    </subcellularLocation>
</comment>
<comment type="miscellaneous">
    <text evidence="1">Heme 1 (or BL or b562) is low-potential and absorbs at about 562 nm, and heme 2 (or BH or b566) is high-potential and absorbs at about 566 nm.</text>
</comment>
<comment type="similarity">
    <text evidence="3 4">Belongs to the cytochrome b family.</text>
</comment>
<comment type="caution">
    <text evidence="2">The full-length protein contains only eight transmembrane helices, not nine as predicted by bioinformatics tools.</text>
</comment>
<geneLocation type="mitochondrion"/>
<name>CYB_SYLFL</name>
<evidence type="ECO:0000250" key="1"/>
<evidence type="ECO:0000250" key="2">
    <source>
        <dbReference type="UniProtKB" id="P00157"/>
    </source>
</evidence>
<evidence type="ECO:0000255" key="3">
    <source>
        <dbReference type="PROSITE-ProRule" id="PRU00967"/>
    </source>
</evidence>
<evidence type="ECO:0000255" key="4">
    <source>
        <dbReference type="PROSITE-ProRule" id="PRU00968"/>
    </source>
</evidence>
<evidence type="ECO:0000305" key="5"/>
<gene>
    <name type="primary">MT-CYB</name>
    <name type="synonym">COB</name>
    <name type="synonym">CYTB</name>
    <name type="synonym">MTCYB</name>
</gene>
<organism>
    <name type="scientific">Sylvilagus floridanus</name>
    <name type="common">Cottontail rabbit</name>
    <dbReference type="NCBI Taxonomy" id="9988"/>
    <lineage>
        <taxon>Eukaryota</taxon>
        <taxon>Metazoa</taxon>
        <taxon>Chordata</taxon>
        <taxon>Craniata</taxon>
        <taxon>Vertebrata</taxon>
        <taxon>Euteleostomi</taxon>
        <taxon>Mammalia</taxon>
        <taxon>Eutheria</taxon>
        <taxon>Euarchontoglires</taxon>
        <taxon>Glires</taxon>
        <taxon>Lagomorpha</taxon>
        <taxon>Leporidae</taxon>
        <taxon>Sylvilagus</taxon>
    </lineage>
</organism>